<feature type="chain" id="PRO_0000320271" description="5,10-methylenetetrahydrofolate reductase">
    <location>
        <begin position="1"/>
        <end position="292"/>
    </location>
</feature>
<feature type="active site" description="Proton donor/acceptor" evidence="1">
    <location>
        <position position="26"/>
    </location>
</feature>
<feature type="binding site" evidence="1">
    <location>
        <position position="57"/>
    </location>
    <ligand>
        <name>NADH</name>
        <dbReference type="ChEBI" id="CHEBI:57945"/>
    </ligand>
</feature>
<feature type="binding site" evidence="1">
    <location>
        <position position="58"/>
    </location>
    <ligand>
        <name>FAD</name>
        <dbReference type="ChEBI" id="CHEBI:57692"/>
    </ligand>
</feature>
<feature type="binding site" evidence="1">
    <location>
        <position position="60"/>
    </location>
    <ligand>
        <name>FAD</name>
        <dbReference type="ChEBI" id="CHEBI:57692"/>
    </ligand>
</feature>
<feature type="binding site" evidence="1">
    <location>
        <position position="86"/>
    </location>
    <ligand>
        <name>FAD</name>
        <dbReference type="ChEBI" id="CHEBI:57692"/>
    </ligand>
</feature>
<feature type="binding site" evidence="1">
    <location>
        <position position="116"/>
    </location>
    <ligand>
        <name>FAD</name>
        <dbReference type="ChEBI" id="CHEBI:57692"/>
    </ligand>
</feature>
<feature type="binding site" evidence="1">
    <location>
        <position position="117"/>
    </location>
    <ligand>
        <name>FAD</name>
        <dbReference type="ChEBI" id="CHEBI:57692"/>
    </ligand>
</feature>
<feature type="binding site" evidence="1">
    <location>
        <position position="118"/>
    </location>
    <ligand>
        <name>(6S)-5-methyl-5,6,7,8-tetrahydrofolate</name>
        <dbReference type="ChEBI" id="CHEBI:18608"/>
    </ligand>
</feature>
<feature type="binding site" evidence="1">
    <location>
        <position position="118"/>
    </location>
    <ligand>
        <name>FAD</name>
        <dbReference type="ChEBI" id="CHEBI:57692"/>
    </ligand>
</feature>
<feature type="binding site" evidence="1">
    <location>
        <position position="130"/>
    </location>
    <ligand>
        <name>FAD</name>
        <dbReference type="ChEBI" id="CHEBI:57692"/>
    </ligand>
</feature>
<feature type="binding site" evidence="1">
    <location>
        <position position="150"/>
    </location>
    <ligand>
        <name>FAD</name>
        <dbReference type="ChEBI" id="CHEBI:57692"/>
    </ligand>
</feature>
<feature type="binding site" evidence="1">
    <location>
        <position position="154"/>
    </location>
    <ligand>
        <name>FAD</name>
        <dbReference type="ChEBI" id="CHEBI:57692"/>
    </ligand>
</feature>
<feature type="binding site" evidence="1">
    <location>
        <position position="157"/>
    </location>
    <ligand>
        <name>FAD</name>
        <dbReference type="ChEBI" id="CHEBI:57692"/>
    </ligand>
</feature>
<feature type="binding site" evidence="1">
    <location>
        <position position="163"/>
    </location>
    <ligand>
        <name>FAD</name>
        <dbReference type="ChEBI" id="CHEBI:57692"/>
    </ligand>
</feature>
<feature type="binding site" evidence="1">
    <location>
        <position position="166"/>
    </location>
    <ligand>
        <name>FAD</name>
        <dbReference type="ChEBI" id="CHEBI:57692"/>
    </ligand>
</feature>
<feature type="binding site" evidence="1">
    <location>
        <position position="169"/>
    </location>
    <ligand>
        <name>FAD</name>
        <dbReference type="ChEBI" id="CHEBI:57692"/>
    </ligand>
</feature>
<feature type="binding site" evidence="1">
    <location>
        <position position="170"/>
    </location>
    <ligand>
        <name>FAD</name>
        <dbReference type="ChEBI" id="CHEBI:57692"/>
    </ligand>
</feature>
<feature type="binding site" evidence="1">
    <location>
        <position position="181"/>
    </location>
    <ligand>
        <name>(6S)-5-methyl-5,6,7,8-tetrahydrofolate</name>
        <dbReference type="ChEBI" id="CHEBI:18608"/>
    </ligand>
</feature>
<feature type="binding site" evidence="1">
    <location>
        <position position="181"/>
    </location>
    <ligand>
        <name>NADH</name>
        <dbReference type="ChEBI" id="CHEBI:57945"/>
    </ligand>
</feature>
<feature type="binding site" evidence="1">
    <location>
        <position position="217"/>
    </location>
    <ligand>
        <name>(6S)-5-methyl-5,6,7,8-tetrahydrofolate</name>
        <dbReference type="ChEBI" id="CHEBI:18608"/>
    </ligand>
</feature>
<feature type="binding site" evidence="1">
    <location>
        <position position="277"/>
    </location>
    <ligand>
        <name>(6S)-5-methyl-5,6,7,8-tetrahydrofolate</name>
        <dbReference type="ChEBI" id="CHEBI:18608"/>
    </ligand>
</feature>
<feature type="helix" evidence="4">
    <location>
        <begin position="3"/>
        <end position="14"/>
    </location>
</feature>
<feature type="strand" evidence="4">
    <location>
        <begin position="22"/>
        <end position="27"/>
    </location>
</feature>
<feature type="strand" evidence="4">
    <location>
        <begin position="31"/>
        <end position="33"/>
    </location>
</feature>
<feature type="helix" evidence="4">
    <location>
        <begin position="34"/>
        <end position="46"/>
    </location>
</feature>
<feature type="helix" evidence="4">
    <location>
        <begin position="47"/>
        <end position="49"/>
    </location>
</feature>
<feature type="strand" evidence="4">
    <location>
        <begin position="52"/>
        <end position="56"/>
    </location>
</feature>
<feature type="helix" evidence="4">
    <location>
        <begin position="67"/>
        <end position="79"/>
    </location>
</feature>
<feature type="strand" evidence="4">
    <location>
        <begin position="83"/>
        <end position="88"/>
    </location>
</feature>
<feature type="turn" evidence="4">
    <location>
        <begin position="89"/>
        <end position="91"/>
    </location>
</feature>
<feature type="helix" evidence="4">
    <location>
        <begin position="94"/>
        <end position="106"/>
    </location>
</feature>
<feature type="strand" evidence="4">
    <location>
        <begin position="111"/>
        <end position="115"/>
    </location>
</feature>
<feature type="helix" evidence="4">
    <location>
        <begin position="130"/>
        <end position="140"/>
    </location>
</feature>
<feature type="strand" evidence="4">
    <location>
        <begin position="144"/>
        <end position="149"/>
    </location>
</feature>
<feature type="helix" evidence="4">
    <location>
        <begin position="160"/>
        <end position="172"/>
    </location>
</feature>
<feature type="strand" evidence="4">
    <location>
        <begin position="177"/>
        <end position="180"/>
    </location>
</feature>
<feature type="helix" evidence="4">
    <location>
        <begin position="186"/>
        <end position="198"/>
    </location>
</feature>
<feature type="helix" evidence="4">
    <location>
        <begin position="215"/>
        <end position="225"/>
    </location>
</feature>
<feature type="helix" evidence="4">
    <location>
        <begin position="231"/>
        <end position="237"/>
    </location>
</feature>
<feature type="helix" evidence="4">
    <location>
        <begin position="244"/>
        <end position="264"/>
    </location>
</feature>
<feature type="strand" evidence="4">
    <location>
        <begin position="269"/>
        <end position="273"/>
    </location>
</feature>
<feature type="helix" evidence="4">
    <location>
        <begin position="279"/>
        <end position="287"/>
    </location>
</feature>
<dbReference type="EC" id="1.5.1.54" evidence="1"/>
<dbReference type="EMBL" id="AE002098">
    <property type="protein sequence ID" value="AAF41349.1"/>
    <property type="molecule type" value="Genomic_DNA"/>
</dbReference>
<dbReference type="PIR" id="D81140">
    <property type="entry name" value="D81140"/>
</dbReference>
<dbReference type="RefSeq" id="NP_273981.1">
    <property type="nucleotide sequence ID" value="NC_003112.2"/>
</dbReference>
<dbReference type="RefSeq" id="WP_002223857.1">
    <property type="nucleotide sequence ID" value="NC_003112.2"/>
</dbReference>
<dbReference type="PDB" id="7RML">
    <property type="method" value="X-ray"/>
    <property type="resolution" value="2.70 A"/>
    <property type="chains" value="A/B/C=1-292"/>
</dbReference>
<dbReference type="PDBsum" id="7RML"/>
<dbReference type="SMR" id="Q9JZQ3"/>
<dbReference type="FunCoup" id="Q9JZQ3">
    <property type="interactions" value="327"/>
</dbReference>
<dbReference type="STRING" id="122586.NMB0943"/>
<dbReference type="PaxDb" id="122586-NMB0943"/>
<dbReference type="KEGG" id="nme:NMB0943"/>
<dbReference type="PATRIC" id="fig|122586.8.peg.1198"/>
<dbReference type="HOGENOM" id="CLU_025841_0_2_4"/>
<dbReference type="InParanoid" id="Q9JZQ3"/>
<dbReference type="OrthoDB" id="9812555at2"/>
<dbReference type="UniPathway" id="UPA00051"/>
<dbReference type="UniPathway" id="UPA00193"/>
<dbReference type="Proteomes" id="UP000000425">
    <property type="component" value="Chromosome"/>
</dbReference>
<dbReference type="GO" id="GO:0005829">
    <property type="term" value="C:cytosol"/>
    <property type="evidence" value="ECO:0007669"/>
    <property type="project" value="InterPro"/>
</dbReference>
<dbReference type="GO" id="GO:0071949">
    <property type="term" value="F:FAD binding"/>
    <property type="evidence" value="ECO:0000318"/>
    <property type="project" value="GO_Central"/>
</dbReference>
<dbReference type="GO" id="GO:0004489">
    <property type="term" value="F:methylenetetrahydrofolate reductase (NAD(P)H) activity"/>
    <property type="evidence" value="ECO:0000318"/>
    <property type="project" value="GO_Central"/>
</dbReference>
<dbReference type="GO" id="GO:0106312">
    <property type="term" value="F:methylenetetrahydrofolate reductase (NADH) activity"/>
    <property type="evidence" value="ECO:0007669"/>
    <property type="project" value="RHEA"/>
</dbReference>
<dbReference type="GO" id="GO:0009086">
    <property type="term" value="P:methionine biosynthetic process"/>
    <property type="evidence" value="ECO:0000318"/>
    <property type="project" value="GO_Central"/>
</dbReference>
<dbReference type="GO" id="GO:0035999">
    <property type="term" value="P:tetrahydrofolate interconversion"/>
    <property type="evidence" value="ECO:0000318"/>
    <property type="project" value="GO_Central"/>
</dbReference>
<dbReference type="CDD" id="cd00537">
    <property type="entry name" value="MTHFR"/>
    <property type="match status" value="1"/>
</dbReference>
<dbReference type="FunFam" id="3.20.20.220:FF:000001">
    <property type="entry name" value="Methylenetetrahydrofolate reductase"/>
    <property type="match status" value="1"/>
</dbReference>
<dbReference type="Gene3D" id="3.20.20.220">
    <property type="match status" value="1"/>
</dbReference>
<dbReference type="InterPro" id="IPR029041">
    <property type="entry name" value="FAD-linked_oxidoreductase-like"/>
</dbReference>
<dbReference type="InterPro" id="IPR003171">
    <property type="entry name" value="Mehydrof_redctse-like"/>
</dbReference>
<dbReference type="InterPro" id="IPR004620">
    <property type="entry name" value="MTHF_reductase_bac"/>
</dbReference>
<dbReference type="NCBIfam" id="TIGR00676">
    <property type="entry name" value="fadh2"/>
    <property type="match status" value="1"/>
</dbReference>
<dbReference type="NCBIfam" id="NF006950">
    <property type="entry name" value="PRK09432.1"/>
    <property type="match status" value="1"/>
</dbReference>
<dbReference type="PANTHER" id="PTHR45754">
    <property type="entry name" value="METHYLENETETRAHYDROFOLATE REDUCTASE"/>
    <property type="match status" value="1"/>
</dbReference>
<dbReference type="PANTHER" id="PTHR45754:SF3">
    <property type="entry name" value="METHYLENETETRAHYDROFOLATE REDUCTASE (NADPH)"/>
    <property type="match status" value="1"/>
</dbReference>
<dbReference type="Pfam" id="PF02219">
    <property type="entry name" value="MTHFR"/>
    <property type="match status" value="1"/>
</dbReference>
<dbReference type="SUPFAM" id="SSF51730">
    <property type="entry name" value="FAD-linked oxidoreductase"/>
    <property type="match status" value="1"/>
</dbReference>
<keyword id="KW-0002">3D-structure</keyword>
<keyword id="KW-0028">Amino-acid biosynthesis</keyword>
<keyword id="KW-0274">FAD</keyword>
<keyword id="KW-0285">Flavoprotein</keyword>
<keyword id="KW-0486">Methionine biosynthesis</keyword>
<keyword id="KW-0520">NAD</keyword>
<keyword id="KW-0560">Oxidoreductase</keyword>
<keyword id="KW-1185">Reference proteome</keyword>
<organism>
    <name type="scientific">Neisseria meningitidis serogroup B (strain ATCC BAA-335 / MC58)</name>
    <dbReference type="NCBI Taxonomy" id="122586"/>
    <lineage>
        <taxon>Bacteria</taxon>
        <taxon>Pseudomonadati</taxon>
        <taxon>Pseudomonadota</taxon>
        <taxon>Betaproteobacteria</taxon>
        <taxon>Neisseriales</taxon>
        <taxon>Neisseriaceae</taxon>
        <taxon>Neisseria</taxon>
    </lineage>
</organism>
<reference key="1">
    <citation type="journal article" date="2000" name="Science">
        <title>Complete genome sequence of Neisseria meningitidis serogroup B strain MC58.</title>
        <authorList>
            <person name="Tettelin H."/>
            <person name="Saunders N.J."/>
            <person name="Heidelberg J.F."/>
            <person name="Jeffries A.C."/>
            <person name="Nelson K.E."/>
            <person name="Eisen J.A."/>
            <person name="Ketchum K.A."/>
            <person name="Hood D.W."/>
            <person name="Peden J.F."/>
            <person name="Dodson R.J."/>
            <person name="Nelson W.C."/>
            <person name="Gwinn M.L."/>
            <person name="DeBoy R.T."/>
            <person name="Peterson J.D."/>
            <person name="Hickey E.K."/>
            <person name="Haft D.H."/>
            <person name="Salzberg S.L."/>
            <person name="White O."/>
            <person name="Fleischmann R.D."/>
            <person name="Dougherty B.A."/>
            <person name="Mason T.M."/>
            <person name="Ciecko A."/>
            <person name="Parksey D.S."/>
            <person name="Blair E."/>
            <person name="Cittone H."/>
            <person name="Clark E.B."/>
            <person name="Cotton M.D."/>
            <person name="Utterback T.R."/>
            <person name="Khouri H.M."/>
            <person name="Qin H."/>
            <person name="Vamathevan J.J."/>
            <person name="Gill J."/>
            <person name="Scarlato V."/>
            <person name="Masignani V."/>
            <person name="Pizza M."/>
            <person name="Grandi G."/>
            <person name="Sun L."/>
            <person name="Smith H.O."/>
            <person name="Fraser C.M."/>
            <person name="Moxon E.R."/>
            <person name="Rappuoli R."/>
            <person name="Venter J.C."/>
        </authorList>
    </citation>
    <scope>NUCLEOTIDE SEQUENCE [LARGE SCALE GENOMIC DNA]</scope>
    <source>
        <strain>ATCC BAA-335 / MC58</strain>
    </source>
</reference>
<reference key="2">
    <citation type="journal article" date="2006" name="Proteomics">
        <title>Proteomic analysis of a meningococcal outer membrane vesicle vaccine prepared from the group B strain NZ98/254.</title>
        <authorList>
            <person name="Vipond C."/>
            <person name="Suker J."/>
            <person name="Jones C."/>
            <person name="Tang C."/>
            <person name="Feavers I.M."/>
            <person name="Wheeler J.X."/>
        </authorList>
    </citation>
    <scope>IDENTIFICATION BY MASS SPECTROMETRY [LARGE SCALE ANALYSIS]</scope>
    <source>
        <strain>NZ98/254 / Serogroup B</strain>
    </source>
</reference>
<name>METF_NEIMB</name>
<gene>
    <name type="primary">metF</name>
    <name type="ordered locus">NMB0943</name>
</gene>
<evidence type="ECO:0000250" key="1">
    <source>
        <dbReference type="UniProtKB" id="P0AEZ1"/>
    </source>
</evidence>
<evidence type="ECO:0000269" key="2">
    <source>
    </source>
</evidence>
<evidence type="ECO:0000305" key="3"/>
<evidence type="ECO:0007829" key="4">
    <source>
        <dbReference type="PDB" id="7RML"/>
    </source>
</evidence>
<accession>Q9JZQ3</accession>
<protein>
    <recommendedName>
        <fullName>5,10-methylenetetrahydrofolate reductase</fullName>
        <ecNumber evidence="1">1.5.1.54</ecNumber>
    </recommendedName>
</protein>
<sequence>MNYAKEINALNNSLSDLKGDINVSFEFFPPKNEQMETMLWDSIHRLQTLHPKFVSVTYGANSGERDRTHGIVKRIKQETGLEAAPHLTGIDASPDELRQIAKDYWDSGIRRIVALRGDEPAGYEKKPFYAEDLVKLLRSVADFDISVAAYPEVHPEAKSAQADLINLKRKIDAGANHVITQFFFDVERYLRFRDRCVMLGIDVEIVPGILPVTNFKQLGKMAQVTNVKIPSWLSQMYEGLDDDQGTRNLVAASIAIDMVKVLSREGVKDFHFYTLNRSELTYAICHILGVRP</sequence>
<proteinExistence type="evidence at protein level"/>
<comment type="function">
    <text evidence="1">Catalyzes the NADH-dependent reduction of 5,10-methylenetetrahydrofolate to 5-methyltetrahydrofolate. Is required to provide the methyl group necessary for methionine synthetase to convert homocysteine to methionine; the methyl group is given by 5-methyltetrahydrofolate.</text>
</comment>
<comment type="catalytic activity">
    <reaction evidence="1">
        <text>(6S)-5-methyl-5,6,7,8-tetrahydrofolate + NAD(+) = (6R)-5,10-methylene-5,6,7,8-tetrahydrofolate + NADH + H(+)</text>
        <dbReference type="Rhea" id="RHEA:19821"/>
        <dbReference type="ChEBI" id="CHEBI:15378"/>
        <dbReference type="ChEBI" id="CHEBI:15636"/>
        <dbReference type="ChEBI" id="CHEBI:18608"/>
        <dbReference type="ChEBI" id="CHEBI:57540"/>
        <dbReference type="ChEBI" id="CHEBI:57945"/>
        <dbReference type="EC" id="1.5.1.54"/>
    </reaction>
    <physiologicalReaction direction="right-to-left" evidence="1">
        <dbReference type="Rhea" id="RHEA:19823"/>
    </physiologicalReaction>
</comment>
<comment type="cofactor">
    <cofactor evidence="1">
        <name>FAD</name>
        <dbReference type="ChEBI" id="CHEBI:57692"/>
    </cofactor>
</comment>
<comment type="pathway">
    <text>One-carbon metabolism; tetrahydrofolate interconversion.</text>
</comment>
<comment type="pathway">
    <text evidence="1">Amino-acid biosynthesis; L-methionine biosynthesis via de novo pathway.</text>
</comment>
<comment type="miscellaneous">
    <text evidence="2">Present in outer membrane vesicle formulations which are used as vaccines in human.</text>
</comment>
<comment type="similarity">
    <text evidence="3">Belongs to the methylenetetrahydrofolate reductase family.</text>
</comment>